<accession>Q24X23</accession>
<dbReference type="EMBL" id="AP008230">
    <property type="protein sequence ID" value="BAE83419.1"/>
    <property type="molecule type" value="Genomic_DNA"/>
</dbReference>
<dbReference type="RefSeq" id="WP_011459803.1">
    <property type="nucleotide sequence ID" value="NC_007907.1"/>
</dbReference>
<dbReference type="SMR" id="Q24X23"/>
<dbReference type="STRING" id="138119.DSY1630"/>
<dbReference type="KEGG" id="dsy:DSY1630"/>
<dbReference type="eggNOG" id="COG1615">
    <property type="taxonomic scope" value="Bacteria"/>
</dbReference>
<dbReference type="HOGENOM" id="CLU_007733_0_0_9"/>
<dbReference type="Proteomes" id="UP000001946">
    <property type="component" value="Chromosome"/>
</dbReference>
<dbReference type="GO" id="GO:0005576">
    <property type="term" value="C:extracellular region"/>
    <property type="evidence" value="ECO:0007669"/>
    <property type="project" value="TreeGrafter"/>
</dbReference>
<dbReference type="GO" id="GO:0005886">
    <property type="term" value="C:plasma membrane"/>
    <property type="evidence" value="ECO:0007669"/>
    <property type="project" value="UniProtKB-SubCell"/>
</dbReference>
<dbReference type="HAMAP" id="MF_01600">
    <property type="entry name" value="UPF0182"/>
    <property type="match status" value="1"/>
</dbReference>
<dbReference type="InterPro" id="IPR005372">
    <property type="entry name" value="UPF0182"/>
</dbReference>
<dbReference type="PANTHER" id="PTHR39344">
    <property type="entry name" value="UPF0182 PROTEIN SLL1060"/>
    <property type="match status" value="1"/>
</dbReference>
<dbReference type="PANTHER" id="PTHR39344:SF1">
    <property type="entry name" value="UPF0182 PROTEIN SLL1060"/>
    <property type="match status" value="1"/>
</dbReference>
<dbReference type="Pfam" id="PF03699">
    <property type="entry name" value="UPF0182"/>
    <property type="match status" value="1"/>
</dbReference>
<proteinExistence type="inferred from homology"/>
<comment type="subcellular location">
    <subcellularLocation>
        <location evidence="1">Cell membrane</location>
        <topology evidence="1">Multi-pass membrane protein</topology>
    </subcellularLocation>
</comment>
<comment type="similarity">
    <text evidence="1">Belongs to the UPF0182 family.</text>
</comment>
<organism>
    <name type="scientific">Desulfitobacterium hafniense (strain Y51)</name>
    <dbReference type="NCBI Taxonomy" id="138119"/>
    <lineage>
        <taxon>Bacteria</taxon>
        <taxon>Bacillati</taxon>
        <taxon>Bacillota</taxon>
        <taxon>Clostridia</taxon>
        <taxon>Eubacteriales</taxon>
        <taxon>Desulfitobacteriaceae</taxon>
        <taxon>Desulfitobacterium</taxon>
    </lineage>
</organism>
<feature type="chain" id="PRO_0000291278" description="UPF0182 protein DSY1630">
    <location>
        <begin position="1"/>
        <end position="960"/>
    </location>
</feature>
<feature type="transmembrane region" description="Helical" evidence="1">
    <location>
        <begin position="7"/>
        <end position="27"/>
    </location>
</feature>
<feature type="transmembrane region" description="Helical" evidence="1">
    <location>
        <begin position="50"/>
        <end position="70"/>
    </location>
</feature>
<feature type="transmembrane region" description="Helical" evidence="1">
    <location>
        <begin position="105"/>
        <end position="125"/>
    </location>
</feature>
<feature type="transmembrane region" description="Helical" evidence="1">
    <location>
        <begin position="169"/>
        <end position="189"/>
    </location>
</feature>
<feature type="transmembrane region" description="Helical" evidence="1">
    <location>
        <begin position="212"/>
        <end position="232"/>
    </location>
</feature>
<feature type="transmembrane region" description="Helical" evidence="1">
    <location>
        <begin position="256"/>
        <end position="276"/>
    </location>
</feature>
<feature type="transmembrane region" description="Helical" evidence="1">
    <location>
        <begin position="285"/>
        <end position="305"/>
    </location>
</feature>
<feature type="region of interest" description="Disordered" evidence="2">
    <location>
        <begin position="866"/>
        <end position="899"/>
    </location>
</feature>
<feature type="region of interest" description="Disordered" evidence="2">
    <location>
        <begin position="924"/>
        <end position="960"/>
    </location>
</feature>
<feature type="compositionally biased region" description="Acidic residues" evidence="2">
    <location>
        <begin position="881"/>
        <end position="897"/>
    </location>
</feature>
<feature type="compositionally biased region" description="Basic and acidic residues" evidence="2">
    <location>
        <begin position="931"/>
        <end position="944"/>
    </location>
</feature>
<feature type="compositionally biased region" description="Polar residues" evidence="2">
    <location>
        <begin position="950"/>
        <end position="960"/>
    </location>
</feature>
<protein>
    <recommendedName>
        <fullName evidence="1">UPF0182 protein DSY1630</fullName>
    </recommendedName>
</protein>
<keyword id="KW-1003">Cell membrane</keyword>
<keyword id="KW-0472">Membrane</keyword>
<keyword id="KW-1185">Reference proteome</keyword>
<keyword id="KW-0812">Transmembrane</keyword>
<keyword id="KW-1133">Transmembrane helix</keyword>
<name>Y1630_DESHY</name>
<reference key="1">
    <citation type="journal article" date="2006" name="J. Bacteriol.">
        <title>Complete genome sequence of the dehalorespiring bacterium Desulfitobacterium hafniense Y51 and comparison with Dehalococcoides ethenogenes 195.</title>
        <authorList>
            <person name="Nonaka H."/>
            <person name="Keresztes G."/>
            <person name="Shinoda Y."/>
            <person name="Ikenaga Y."/>
            <person name="Abe M."/>
            <person name="Naito K."/>
            <person name="Inatomi K."/>
            <person name="Furukawa K."/>
            <person name="Inui M."/>
            <person name="Yukawa H."/>
        </authorList>
    </citation>
    <scope>NUCLEOTIDE SEQUENCE [LARGE SCALE GENOMIC DNA]</scope>
    <source>
        <strain>Y51</strain>
    </source>
</reference>
<evidence type="ECO:0000255" key="1">
    <source>
        <dbReference type="HAMAP-Rule" id="MF_01600"/>
    </source>
</evidence>
<evidence type="ECO:0000256" key="2">
    <source>
        <dbReference type="SAM" id="MobiDB-lite"/>
    </source>
</evidence>
<sequence length="960" mass="109535">MRRTARIMLVLLGIGLILFIALSGLFEDYLWYSDLGYSQLFWTPLISKGIIQIINGTILFTFIAGTLFSIRHAILTFVNERLRKRLRLVHEMDRPLYHLSQRKMTLWLIIISVLISFGVSFVTGFTGWLEVLTFLNATPFGQGDPIFFKDLGFYVFQLPFFITIYNAFFGPLFFLTFFTIVFYSFAGVIHFQSLLIWKKQAIEINSAARRHLALLITVLFLFKGFGCYFDTFRLLYSQHGLVLGAGYADLHATLPALKALLVLCALGVIGGGLAFFKDEVRLLTLPILAIFISIPLLSGLGPMVLQSLVVIPNELEKETPYIQNEIALTRFAYGLDQISEEDYQADQPLTSETLQKELPTLNNVRLNDPHPLLRTYTQKQGIRPYYKFYNIDMDRYWINGEYRQVMLAPREFSYQDLEKTAQTFVNLRFKYTHGFGVVASFANAVTPEGLPAFAIKDVPPTTDYQELQISQPRIYFGEMTHDWVVVNTDLKEFDYPEGKANAETRYEGKSGIKLTPFNRLMLSIKHGTLRFYLANEINSQSRILLHRNIMDRVEKLAPFLQYDDNPYLVVDEGRLKWIIDAYTVSKTFPYSSMYPERELNYIRNSVKVVVDAYDGTVDFFAVDAQDPILQTYRKIFPGVFKDLSAMPDTLQTHLRYPETLFKIQSTMLKNFHMTDPTVFYNKEDTWDIAKELFGSEPQNIAPYYSVMRLPDSEQPESVLMIPFTPSSNANNIRTNMVAWLAARMDGEHYGELILYKVPKNTEVDGPLQVESRIDQDPEISRQLALWDQKGSSVIRGDLVVLPLAGNFLYVEPIYLQSEKAGSIPEMKRVIVAYGDKIVMSETFEEALAQLFGVRLKLSPPPPANVSALAVSPMSAELKPEETEETTEETEEPVDPQEDTQALLKQIEQIREMLNQLEQQFKKITGDSVDVEGGKKADEDAHDVQTDPEGSVSSEQSKTNP</sequence>
<gene>
    <name type="ordered locus">DSY1630</name>
</gene>